<feature type="chain" id="PRO_1000185395" description="Phosphoglucosamine mutase">
    <location>
        <begin position="1"/>
        <end position="446"/>
    </location>
</feature>
<feature type="active site" description="Phosphoserine intermediate" evidence="1">
    <location>
        <position position="103"/>
    </location>
</feature>
<feature type="binding site" description="via phosphate group" evidence="1">
    <location>
        <position position="103"/>
    </location>
    <ligand>
        <name>Mg(2+)</name>
        <dbReference type="ChEBI" id="CHEBI:18420"/>
    </ligand>
</feature>
<feature type="binding site" evidence="1">
    <location>
        <position position="242"/>
    </location>
    <ligand>
        <name>Mg(2+)</name>
        <dbReference type="ChEBI" id="CHEBI:18420"/>
    </ligand>
</feature>
<feature type="binding site" evidence="1">
    <location>
        <position position="244"/>
    </location>
    <ligand>
        <name>Mg(2+)</name>
        <dbReference type="ChEBI" id="CHEBI:18420"/>
    </ligand>
</feature>
<feature type="binding site" evidence="1">
    <location>
        <position position="246"/>
    </location>
    <ligand>
        <name>Mg(2+)</name>
        <dbReference type="ChEBI" id="CHEBI:18420"/>
    </ligand>
</feature>
<feature type="modified residue" description="Phosphoserine" evidence="1">
    <location>
        <position position="103"/>
    </location>
</feature>
<gene>
    <name evidence="1" type="primary">glmM</name>
    <name type="ordered locus">VS_2488</name>
</gene>
<sequence>MSEKRRYFGTDGVRGKVGQYPITPDFVLKLGWAAGRVLAKQGTKKVIIGKDTRISGYMLESALEAGLAAAGLQATFTGPMPTPAVAYLTQTFRAEAGIVISASHNPYYDNGIKFFSSEGTKLSDEIELAIEAELDKDIECVESSELGKAVRLNDAAGRYIEFCKSTFPHKMTLAGMKIVVDCAHGATYHIAPAVFKELGAEVVAIGVEPNGTNINHEVGATDVRALQAKVVEEKAALGLGFDGDGDRIIMVDELGNKVDGDQIAYIIARDALRRGELKGGVVGTLMTNLGMENGLKQLGIPFVRAAVGDRYVMEQLLAKGWKIGAENSGHVILLDKVTTGDAIVAALQVLASVVDSEMTLNELSQGMTLYPQVLENVRFSGDSNPLEAEAVKAAVIEVETELGEKGRVLLRKSGTEPLLRVMVEGEDAELVQSSALKIADAVKANC</sequence>
<reference key="1">
    <citation type="submission" date="2009-02" db="EMBL/GenBank/DDBJ databases">
        <title>Vibrio splendidus str. LGP32 complete genome.</title>
        <authorList>
            <person name="Mazel D."/>
            <person name="Le Roux F."/>
        </authorList>
    </citation>
    <scope>NUCLEOTIDE SEQUENCE [LARGE SCALE GENOMIC DNA]</scope>
    <source>
        <strain>LGP32</strain>
    </source>
</reference>
<name>GLMM_VIBA3</name>
<organism>
    <name type="scientific">Vibrio atlanticus (strain LGP32)</name>
    <name type="common">Vibrio splendidus (strain Mel32)</name>
    <dbReference type="NCBI Taxonomy" id="575788"/>
    <lineage>
        <taxon>Bacteria</taxon>
        <taxon>Pseudomonadati</taxon>
        <taxon>Pseudomonadota</taxon>
        <taxon>Gammaproteobacteria</taxon>
        <taxon>Vibrionales</taxon>
        <taxon>Vibrionaceae</taxon>
        <taxon>Vibrio</taxon>
    </lineage>
</organism>
<dbReference type="EC" id="5.4.2.10" evidence="1"/>
<dbReference type="EMBL" id="FM954972">
    <property type="protein sequence ID" value="CAV19645.1"/>
    <property type="molecule type" value="Genomic_DNA"/>
</dbReference>
<dbReference type="SMR" id="B7VJI1"/>
<dbReference type="STRING" id="575788.VS_2488"/>
<dbReference type="KEGG" id="vsp:VS_2488"/>
<dbReference type="PATRIC" id="fig|575788.5.peg.3746"/>
<dbReference type="eggNOG" id="COG1109">
    <property type="taxonomic scope" value="Bacteria"/>
</dbReference>
<dbReference type="HOGENOM" id="CLU_016950_7_0_6"/>
<dbReference type="Proteomes" id="UP000009100">
    <property type="component" value="Chromosome 1"/>
</dbReference>
<dbReference type="GO" id="GO:0005829">
    <property type="term" value="C:cytosol"/>
    <property type="evidence" value="ECO:0007669"/>
    <property type="project" value="TreeGrafter"/>
</dbReference>
<dbReference type="GO" id="GO:0000287">
    <property type="term" value="F:magnesium ion binding"/>
    <property type="evidence" value="ECO:0007669"/>
    <property type="project" value="UniProtKB-UniRule"/>
</dbReference>
<dbReference type="GO" id="GO:0008966">
    <property type="term" value="F:phosphoglucosamine mutase activity"/>
    <property type="evidence" value="ECO:0007669"/>
    <property type="project" value="UniProtKB-UniRule"/>
</dbReference>
<dbReference type="GO" id="GO:0004615">
    <property type="term" value="F:phosphomannomutase activity"/>
    <property type="evidence" value="ECO:0007669"/>
    <property type="project" value="TreeGrafter"/>
</dbReference>
<dbReference type="GO" id="GO:0005975">
    <property type="term" value="P:carbohydrate metabolic process"/>
    <property type="evidence" value="ECO:0007669"/>
    <property type="project" value="InterPro"/>
</dbReference>
<dbReference type="GO" id="GO:0009252">
    <property type="term" value="P:peptidoglycan biosynthetic process"/>
    <property type="evidence" value="ECO:0007669"/>
    <property type="project" value="TreeGrafter"/>
</dbReference>
<dbReference type="GO" id="GO:0006048">
    <property type="term" value="P:UDP-N-acetylglucosamine biosynthetic process"/>
    <property type="evidence" value="ECO:0007669"/>
    <property type="project" value="TreeGrafter"/>
</dbReference>
<dbReference type="CDD" id="cd05802">
    <property type="entry name" value="GlmM"/>
    <property type="match status" value="1"/>
</dbReference>
<dbReference type="FunFam" id="3.30.310.50:FF:000001">
    <property type="entry name" value="Phosphoglucosamine mutase"/>
    <property type="match status" value="1"/>
</dbReference>
<dbReference type="FunFam" id="3.40.120.10:FF:000001">
    <property type="entry name" value="Phosphoglucosamine mutase"/>
    <property type="match status" value="1"/>
</dbReference>
<dbReference type="FunFam" id="3.40.120.10:FF:000002">
    <property type="entry name" value="Phosphoglucosamine mutase"/>
    <property type="match status" value="1"/>
</dbReference>
<dbReference type="Gene3D" id="3.40.120.10">
    <property type="entry name" value="Alpha-D-Glucose-1,6-Bisphosphate, subunit A, domain 3"/>
    <property type="match status" value="3"/>
</dbReference>
<dbReference type="Gene3D" id="3.30.310.50">
    <property type="entry name" value="Alpha-D-phosphohexomutase, C-terminal domain"/>
    <property type="match status" value="1"/>
</dbReference>
<dbReference type="HAMAP" id="MF_01554_B">
    <property type="entry name" value="GlmM_B"/>
    <property type="match status" value="1"/>
</dbReference>
<dbReference type="InterPro" id="IPR005844">
    <property type="entry name" value="A-D-PHexomutase_a/b/a-I"/>
</dbReference>
<dbReference type="InterPro" id="IPR016055">
    <property type="entry name" value="A-D-PHexomutase_a/b/a-I/II/III"/>
</dbReference>
<dbReference type="InterPro" id="IPR005845">
    <property type="entry name" value="A-D-PHexomutase_a/b/a-II"/>
</dbReference>
<dbReference type="InterPro" id="IPR005846">
    <property type="entry name" value="A-D-PHexomutase_a/b/a-III"/>
</dbReference>
<dbReference type="InterPro" id="IPR005843">
    <property type="entry name" value="A-D-PHexomutase_C"/>
</dbReference>
<dbReference type="InterPro" id="IPR036900">
    <property type="entry name" value="A-D-PHexomutase_C_sf"/>
</dbReference>
<dbReference type="InterPro" id="IPR016066">
    <property type="entry name" value="A-D-PHexomutase_CS"/>
</dbReference>
<dbReference type="InterPro" id="IPR005841">
    <property type="entry name" value="Alpha-D-phosphohexomutase_SF"/>
</dbReference>
<dbReference type="InterPro" id="IPR006352">
    <property type="entry name" value="GlmM_bact"/>
</dbReference>
<dbReference type="InterPro" id="IPR050060">
    <property type="entry name" value="Phosphoglucosamine_mutase"/>
</dbReference>
<dbReference type="NCBIfam" id="TIGR01455">
    <property type="entry name" value="glmM"/>
    <property type="match status" value="1"/>
</dbReference>
<dbReference type="NCBIfam" id="NF008139">
    <property type="entry name" value="PRK10887.1"/>
    <property type="match status" value="1"/>
</dbReference>
<dbReference type="PANTHER" id="PTHR42946:SF1">
    <property type="entry name" value="PHOSPHOGLUCOMUTASE (ALPHA-D-GLUCOSE-1,6-BISPHOSPHATE-DEPENDENT)"/>
    <property type="match status" value="1"/>
</dbReference>
<dbReference type="PANTHER" id="PTHR42946">
    <property type="entry name" value="PHOSPHOHEXOSE MUTASE"/>
    <property type="match status" value="1"/>
</dbReference>
<dbReference type="Pfam" id="PF02878">
    <property type="entry name" value="PGM_PMM_I"/>
    <property type="match status" value="1"/>
</dbReference>
<dbReference type="Pfam" id="PF02879">
    <property type="entry name" value="PGM_PMM_II"/>
    <property type="match status" value="1"/>
</dbReference>
<dbReference type="Pfam" id="PF02880">
    <property type="entry name" value="PGM_PMM_III"/>
    <property type="match status" value="1"/>
</dbReference>
<dbReference type="Pfam" id="PF00408">
    <property type="entry name" value="PGM_PMM_IV"/>
    <property type="match status" value="1"/>
</dbReference>
<dbReference type="PRINTS" id="PR00509">
    <property type="entry name" value="PGMPMM"/>
</dbReference>
<dbReference type="SUPFAM" id="SSF55957">
    <property type="entry name" value="Phosphoglucomutase, C-terminal domain"/>
    <property type="match status" value="1"/>
</dbReference>
<dbReference type="SUPFAM" id="SSF53738">
    <property type="entry name" value="Phosphoglucomutase, first 3 domains"/>
    <property type="match status" value="3"/>
</dbReference>
<dbReference type="PROSITE" id="PS00710">
    <property type="entry name" value="PGM_PMM"/>
    <property type="match status" value="1"/>
</dbReference>
<comment type="function">
    <text evidence="1">Catalyzes the conversion of glucosamine-6-phosphate to glucosamine-1-phosphate.</text>
</comment>
<comment type="catalytic activity">
    <reaction evidence="1">
        <text>alpha-D-glucosamine 1-phosphate = D-glucosamine 6-phosphate</text>
        <dbReference type="Rhea" id="RHEA:23424"/>
        <dbReference type="ChEBI" id="CHEBI:58516"/>
        <dbReference type="ChEBI" id="CHEBI:58725"/>
        <dbReference type="EC" id="5.4.2.10"/>
    </reaction>
</comment>
<comment type="cofactor">
    <cofactor evidence="1">
        <name>Mg(2+)</name>
        <dbReference type="ChEBI" id="CHEBI:18420"/>
    </cofactor>
    <text evidence="1">Binds 1 Mg(2+) ion per subunit.</text>
</comment>
<comment type="PTM">
    <text evidence="1">Activated by phosphorylation.</text>
</comment>
<comment type="similarity">
    <text evidence="1">Belongs to the phosphohexose mutase family.</text>
</comment>
<evidence type="ECO:0000255" key="1">
    <source>
        <dbReference type="HAMAP-Rule" id="MF_01554"/>
    </source>
</evidence>
<keyword id="KW-0413">Isomerase</keyword>
<keyword id="KW-0460">Magnesium</keyword>
<keyword id="KW-0479">Metal-binding</keyword>
<keyword id="KW-0597">Phosphoprotein</keyword>
<proteinExistence type="inferred from homology"/>
<accession>B7VJI1</accession>
<protein>
    <recommendedName>
        <fullName evidence="1">Phosphoglucosamine mutase</fullName>
        <ecNumber evidence="1">5.4.2.10</ecNumber>
    </recommendedName>
</protein>